<reference key="1">
    <citation type="journal article" date="2004" name="Nat. Biotechnol.">
        <title>The genome sequence of the extreme thermophile Thermus thermophilus.</title>
        <authorList>
            <person name="Henne A."/>
            <person name="Brueggemann H."/>
            <person name="Raasch C."/>
            <person name="Wiezer A."/>
            <person name="Hartsch T."/>
            <person name="Liesegang H."/>
            <person name="Johann A."/>
            <person name="Lienard T."/>
            <person name="Gohl O."/>
            <person name="Martinez-Arias R."/>
            <person name="Jacobi C."/>
            <person name="Starkuviene V."/>
            <person name="Schlenczeck S."/>
            <person name="Dencker S."/>
            <person name="Huber R."/>
            <person name="Klenk H.-P."/>
            <person name="Kramer W."/>
            <person name="Merkl R."/>
            <person name="Gottschalk G."/>
            <person name="Fritz H.-J."/>
        </authorList>
    </citation>
    <scope>NUCLEOTIDE SEQUENCE [LARGE SCALE GENOMIC DNA]</scope>
    <source>
        <strain>ATCC BAA-163 / DSM 7039 / HB27</strain>
    </source>
</reference>
<reference key="2">
    <citation type="journal article" date="2008" name="Nat. Struct. Mol. Biol.">
        <title>Structural insights into the dual activity of RNase J.</title>
        <authorList>
            <person name="Li de la Sierra-Gallay I."/>
            <person name="Zig L."/>
            <person name="Jamalli A."/>
            <person name="Putzer H."/>
        </authorList>
    </citation>
    <scope>X-RAY CRYSTALLOGRAPHY (2.10 ANGSTROMS) OF 20-573 IN CLOSED CONFORMATION IN COMPLEX WITH ZINC WITH OR WITHOUT SUBSTRATE</scope>
    <scope>FUNCTION AS AN ENDONUCLEASE</scope>
    <scope>SUBUNIT</scope>
    <source>
        <strain>ATCC BAA-163 / DSM 7039 / HB27</strain>
    </source>
</reference>
<reference key="3">
    <citation type="journal article" date="2011" name="Structure">
        <title>Molecular basis for the recognition and cleavage of RNA by the bifunctional 5'-3' exo/endoribonuclease RNase J.</title>
        <authorList>
            <person name="Dorleans A."/>
            <person name="Li de la Sierra-Gallay I."/>
            <person name="Piton J."/>
            <person name="Zig L."/>
            <person name="Gilet L."/>
            <person name="Putzer H."/>
            <person name="Condon C."/>
        </authorList>
    </citation>
    <scope>X-RAY CRYSTALLOGRAPHY (2.50 ANGSTROMS) OF 20-572 IN CLOSED CONFORMATION IN COMPLEX WITH ZINC AND SUBSTRATE</scope>
    <scope>RNA-BINDING</scope>
    <scope>MUTAGENESIS OF HIS-95</scope>
    <source>
        <strain>ATCC BAA-163 / DSM 7039 / HB27</strain>
    </source>
</reference>
<evidence type="ECO:0000250" key="1"/>
<evidence type="ECO:0000255" key="2">
    <source>
        <dbReference type="HAMAP-Rule" id="MF_01491"/>
    </source>
</evidence>
<evidence type="ECO:0000256" key="3">
    <source>
        <dbReference type="SAM" id="MobiDB-lite"/>
    </source>
</evidence>
<evidence type="ECO:0000269" key="4">
    <source>
    </source>
</evidence>
<evidence type="ECO:0000269" key="5">
    <source>
    </source>
</evidence>
<evidence type="ECO:0000305" key="6"/>
<evidence type="ECO:0007829" key="7">
    <source>
        <dbReference type="PDB" id="3BK2"/>
    </source>
</evidence>
<evidence type="ECO:0007829" key="8">
    <source>
        <dbReference type="PDB" id="3T3O"/>
    </source>
</evidence>
<dbReference type="EC" id="3.1.-.-" evidence="2"/>
<dbReference type="EMBL" id="AE017221">
    <property type="protein sequence ID" value="AAS81121.1"/>
    <property type="molecule type" value="Genomic_DNA"/>
</dbReference>
<dbReference type="RefSeq" id="WP_011173208.1">
    <property type="nucleotide sequence ID" value="NC_005835.1"/>
</dbReference>
<dbReference type="PDB" id="3BK1">
    <property type="method" value="X-ray"/>
    <property type="resolution" value="2.33 A"/>
    <property type="chains" value="A=20-573"/>
</dbReference>
<dbReference type="PDB" id="3BK2">
    <property type="method" value="X-ray"/>
    <property type="resolution" value="2.10 A"/>
    <property type="chains" value="A=20-573"/>
</dbReference>
<dbReference type="PDB" id="3T3N">
    <property type="method" value="X-ray"/>
    <property type="resolution" value="3.09 A"/>
    <property type="chains" value="A=20-572"/>
</dbReference>
<dbReference type="PDB" id="3T3O">
    <property type="method" value="X-ray"/>
    <property type="resolution" value="2.50 A"/>
    <property type="chains" value="A=20-572"/>
</dbReference>
<dbReference type="PDBsum" id="3BK1"/>
<dbReference type="PDBsum" id="3BK2"/>
<dbReference type="PDBsum" id="3T3N"/>
<dbReference type="PDBsum" id="3T3O"/>
<dbReference type="SMR" id="Q72JJ7"/>
<dbReference type="DIP" id="DIP-46391N"/>
<dbReference type="GeneID" id="3169514"/>
<dbReference type="KEGG" id="tth:TT_C0775"/>
<dbReference type="eggNOG" id="COG0595">
    <property type="taxonomic scope" value="Bacteria"/>
</dbReference>
<dbReference type="HOGENOM" id="CLU_008727_3_1_0"/>
<dbReference type="OrthoDB" id="9758375at2"/>
<dbReference type="BRENDA" id="4.6.1.22">
    <property type="organism ID" value="2305"/>
</dbReference>
<dbReference type="EvolutionaryTrace" id="Q72JJ7"/>
<dbReference type="Proteomes" id="UP000000592">
    <property type="component" value="Chromosome"/>
</dbReference>
<dbReference type="GO" id="GO:0005737">
    <property type="term" value="C:cytoplasm"/>
    <property type="evidence" value="ECO:0007669"/>
    <property type="project" value="UniProtKB-SubCell"/>
</dbReference>
<dbReference type="GO" id="GO:0004534">
    <property type="term" value="F:5'-3' RNA exonuclease activity"/>
    <property type="evidence" value="ECO:0007669"/>
    <property type="project" value="UniProtKB-UniRule"/>
</dbReference>
<dbReference type="GO" id="GO:0042802">
    <property type="term" value="F:identical protein binding"/>
    <property type="evidence" value="ECO:0000353"/>
    <property type="project" value="IntAct"/>
</dbReference>
<dbReference type="GO" id="GO:0003723">
    <property type="term" value="F:RNA binding"/>
    <property type="evidence" value="ECO:0007669"/>
    <property type="project" value="UniProtKB-UniRule"/>
</dbReference>
<dbReference type="GO" id="GO:0004521">
    <property type="term" value="F:RNA endonuclease activity"/>
    <property type="evidence" value="ECO:0007669"/>
    <property type="project" value="UniProtKB-UniRule"/>
</dbReference>
<dbReference type="GO" id="GO:0008270">
    <property type="term" value="F:zinc ion binding"/>
    <property type="evidence" value="ECO:0007669"/>
    <property type="project" value="InterPro"/>
</dbReference>
<dbReference type="GO" id="GO:0006364">
    <property type="term" value="P:rRNA processing"/>
    <property type="evidence" value="ECO:0007669"/>
    <property type="project" value="UniProtKB-UniRule"/>
</dbReference>
<dbReference type="CDD" id="cd07714">
    <property type="entry name" value="RNaseJ_MBL-fold"/>
    <property type="match status" value="1"/>
</dbReference>
<dbReference type="Gene3D" id="3.10.20.580">
    <property type="match status" value="1"/>
</dbReference>
<dbReference type="Gene3D" id="3.40.50.10710">
    <property type="entry name" value="Metallo-hydrolase/oxidoreductase"/>
    <property type="match status" value="1"/>
</dbReference>
<dbReference type="Gene3D" id="3.60.15.10">
    <property type="entry name" value="Ribonuclease Z/Hydroxyacylglutathione hydrolase-like"/>
    <property type="match status" value="1"/>
</dbReference>
<dbReference type="HAMAP" id="MF_01491">
    <property type="entry name" value="RNase_J_bact"/>
    <property type="match status" value="1"/>
</dbReference>
<dbReference type="InterPro" id="IPR001279">
    <property type="entry name" value="Metallo-B-lactamas"/>
</dbReference>
<dbReference type="InterPro" id="IPR036866">
    <property type="entry name" value="RibonucZ/Hydroxyglut_hydro"/>
</dbReference>
<dbReference type="InterPro" id="IPR011108">
    <property type="entry name" value="RMMBL"/>
</dbReference>
<dbReference type="InterPro" id="IPR004613">
    <property type="entry name" value="RNase_J"/>
</dbReference>
<dbReference type="InterPro" id="IPR042173">
    <property type="entry name" value="RNase_J_2"/>
</dbReference>
<dbReference type="InterPro" id="IPR055132">
    <property type="entry name" value="RNase_J_b_CASP"/>
</dbReference>
<dbReference type="InterPro" id="IPR030854">
    <property type="entry name" value="RNase_J_bac"/>
</dbReference>
<dbReference type="InterPro" id="IPR041636">
    <property type="entry name" value="RNase_J_C"/>
</dbReference>
<dbReference type="NCBIfam" id="TIGR00649">
    <property type="entry name" value="MG423"/>
    <property type="match status" value="1"/>
</dbReference>
<dbReference type="PANTHER" id="PTHR43694">
    <property type="entry name" value="RIBONUCLEASE J"/>
    <property type="match status" value="1"/>
</dbReference>
<dbReference type="PANTHER" id="PTHR43694:SF1">
    <property type="entry name" value="RIBONUCLEASE J"/>
    <property type="match status" value="1"/>
</dbReference>
<dbReference type="Pfam" id="PF12706">
    <property type="entry name" value="Lactamase_B_2"/>
    <property type="match status" value="1"/>
</dbReference>
<dbReference type="Pfam" id="PF07521">
    <property type="entry name" value="RMMBL"/>
    <property type="match status" value="1"/>
</dbReference>
<dbReference type="Pfam" id="PF22505">
    <property type="entry name" value="RNase_J_b_CASP"/>
    <property type="match status" value="1"/>
</dbReference>
<dbReference type="Pfam" id="PF17770">
    <property type="entry name" value="RNase_J_C"/>
    <property type="match status" value="1"/>
</dbReference>
<dbReference type="PIRSF" id="PIRSF004803">
    <property type="entry name" value="RnjA"/>
    <property type="match status" value="1"/>
</dbReference>
<dbReference type="SMART" id="SM00849">
    <property type="entry name" value="Lactamase_B"/>
    <property type="match status" value="1"/>
</dbReference>
<dbReference type="SUPFAM" id="SSF56281">
    <property type="entry name" value="Metallo-hydrolase/oxidoreductase"/>
    <property type="match status" value="1"/>
</dbReference>
<dbReference type="PROSITE" id="PS00216">
    <property type="entry name" value="SUGAR_TRANSPORT_1"/>
    <property type="match status" value="1"/>
</dbReference>
<keyword id="KW-0002">3D-structure</keyword>
<keyword id="KW-0963">Cytoplasm</keyword>
<keyword id="KW-0255">Endonuclease</keyword>
<keyword id="KW-0269">Exonuclease</keyword>
<keyword id="KW-0378">Hydrolase</keyword>
<keyword id="KW-0479">Metal-binding</keyword>
<keyword id="KW-0540">Nuclease</keyword>
<keyword id="KW-0694">RNA-binding</keyword>
<keyword id="KW-0698">rRNA processing</keyword>
<keyword id="KW-0862">Zinc</keyword>
<accession>Q72JJ7</accession>
<gene>
    <name evidence="2" type="primary">rnj</name>
    <name type="ordered locus">TT_C0775</name>
</gene>
<comment type="function">
    <text evidence="4">An RNase that has endonuclease and possibly 5'-3' exonuclease activity. Probably involved in maturation of rRNA and in some organisms also mRNA maturation and/or decay.</text>
</comment>
<comment type="cofactor">
    <cofactor evidence="2 5">
        <name>Zn(2+)</name>
        <dbReference type="ChEBI" id="CHEBI:29105"/>
    </cofactor>
    <text evidence="2 5">Binds up to 2 Zn(2+) ions per subunit. It is not clear if Zn(2+) or Mg(2+) is physiologically important.</text>
</comment>
<comment type="subunit">
    <text evidence="1 6">Homodimer (Probable). May be a subunit of the RNA degradosome (By similarity).</text>
</comment>
<comment type="interaction">
    <interactant intactId="EBI-15680417">
        <id>Q72JJ7</id>
    </interactant>
    <interactant intactId="EBI-15680417">
        <id>Q72JJ7</id>
        <label>rnj</label>
    </interactant>
    <organismsDiffer>false</organismsDiffer>
    <experiments>3</experiments>
</comment>
<comment type="subcellular location">
    <subcellularLocation>
        <location evidence="2">Cytoplasm</location>
    </subcellularLocation>
</comment>
<comment type="similarity">
    <text evidence="2">Belongs to the metallo-beta-lactamase superfamily. RNA-metabolizing metallo-beta-lactamase-like family. Bacterial RNase J subfamily.</text>
</comment>
<protein>
    <recommendedName>
        <fullName evidence="2">Ribonuclease J</fullName>
        <shortName evidence="2">RNase J</shortName>
        <ecNumber evidence="2">3.1.-.-</ecNumber>
    </recommendedName>
</protein>
<sequence length="573" mass="64031">MENQERKPRRRRRRRPQEGSQGGPQDHVEIIPLGGMGEIGKNITVFRFRDEIFVLDGGLAFPEEGMPGVDLLIPRVDYLIEHRHKIKAWVLTHGHEDHIGGLPFLLPMIFGKESPVPIYGARLTLGLLRGKLEEFGLRPGAFNLKEISPDDRIQVGRYFTLDLFRMTHSIPDNSGVVIRTPIGTIVHTGDFKLDPTPIDGKVSHLAKVAQAGAEGVLLLIADATNAERPGYTPSEMEIAKELDRVIGRAPGRVFVTTFASHIHRIQSVIWAAEKYGRKVAMEGRSMLKFSRIALELGYLKVKDRLYTLEEVKDLPDHQVLILATGSQGQPMSVLHRLAFEGHAKMAIKPGDTVILSSSPIPGNEEAVNRVINRLYALGAYVLYPPTYKVHASGHASQEELKLILNLTTPRFFLPWHGEVRHQMNFKWLAESMSRPPEKTLIGENGAVYRLTRETFEKVGEVPHGVLYVDGLGVGDITEEILADRRHMAEEGLVVITALAGEDPVVEVVSRGFVKAGERLLGEVRRMALEALKNGVREKKPLERIRDDIYYPVKKFLKKATGRDPMILPVVIEG</sequence>
<feature type="chain" id="PRO_0000429577" description="Ribonuclease J">
    <location>
        <begin position="1"/>
        <end position="573"/>
    </location>
</feature>
<feature type="region of interest" description="Disordered" evidence="3">
    <location>
        <begin position="1"/>
        <end position="29"/>
    </location>
</feature>
<feature type="binding site" evidence="2 5">
    <location>
        <position position="93"/>
    </location>
    <ligand>
        <name>Zn(2+)</name>
        <dbReference type="ChEBI" id="CHEBI:29105"/>
        <label>1</label>
        <note>catalytic</note>
    </ligand>
</feature>
<feature type="binding site" evidence="2 5">
    <location>
        <position position="95"/>
    </location>
    <ligand>
        <name>Zn(2+)</name>
        <dbReference type="ChEBI" id="CHEBI:29105"/>
        <label>1</label>
        <note>catalytic</note>
    </ligand>
</feature>
<feature type="binding site" evidence="2 5">
    <location>
        <position position="97"/>
    </location>
    <ligand>
        <name>Zn(2+)</name>
        <dbReference type="ChEBI" id="CHEBI:29105"/>
        <label>2</label>
        <note>catalytic</note>
    </ligand>
</feature>
<feature type="binding site" evidence="2 5">
    <location>
        <position position="98"/>
    </location>
    <ligand>
        <name>Zn(2+)</name>
        <dbReference type="ChEBI" id="CHEBI:29105"/>
        <label>2</label>
        <note>catalytic</note>
    </ligand>
</feature>
<feature type="binding site" evidence="2 5">
    <location>
        <position position="168"/>
    </location>
    <ligand>
        <name>Zn(2+)</name>
        <dbReference type="ChEBI" id="CHEBI:29105"/>
        <label>1</label>
        <note>catalytic</note>
    </ligand>
</feature>
<feature type="binding site" evidence="2 5">
    <location>
        <position position="190"/>
    </location>
    <ligand>
        <name>Zn(2+)</name>
        <dbReference type="ChEBI" id="CHEBI:29105"/>
        <label>1</label>
        <note>catalytic</note>
    </ligand>
</feature>
<feature type="binding site" evidence="2 5">
    <location>
        <position position="190"/>
    </location>
    <ligand>
        <name>Zn(2+)</name>
        <dbReference type="ChEBI" id="CHEBI:29105"/>
        <label>2</label>
        <note>catalytic</note>
    </ligand>
</feature>
<feature type="binding site">
    <location>
        <begin position="259"/>
        <end position="261"/>
    </location>
    <ligand>
        <name>substrate</name>
    </ligand>
</feature>
<feature type="binding site">
    <location>
        <begin position="390"/>
        <end position="394"/>
    </location>
    <ligand>
        <name>substrate</name>
    </ligand>
</feature>
<feature type="binding site" evidence="2 5">
    <location>
        <position position="416"/>
    </location>
    <ligand>
        <name>Zn(2+)</name>
        <dbReference type="ChEBI" id="CHEBI:29105"/>
        <label>2</label>
        <note>catalytic</note>
    </ligand>
</feature>
<feature type="site" description="Substrate binding">
    <location>
        <position position="60"/>
    </location>
</feature>
<feature type="mutagenesis site" description="Catalytically inactive." evidence="5">
    <original>H</original>
    <variation>A</variation>
    <location>
        <position position="95"/>
    </location>
</feature>
<feature type="strand" evidence="8">
    <location>
        <begin position="23"/>
        <end position="25"/>
    </location>
</feature>
<feature type="strand" evidence="7">
    <location>
        <begin position="28"/>
        <end position="40"/>
    </location>
</feature>
<feature type="strand" evidence="7">
    <location>
        <begin position="43"/>
        <end position="48"/>
    </location>
</feature>
<feature type="strand" evidence="7">
    <location>
        <begin position="51"/>
        <end position="55"/>
    </location>
</feature>
<feature type="strand" evidence="7">
    <location>
        <begin position="71"/>
        <end position="74"/>
    </location>
</feature>
<feature type="helix" evidence="7">
    <location>
        <begin position="77"/>
        <end position="81"/>
    </location>
</feature>
<feature type="helix" evidence="7">
    <location>
        <begin position="83"/>
        <end position="85"/>
    </location>
</feature>
<feature type="strand" evidence="7">
    <location>
        <begin position="86"/>
        <end position="90"/>
    </location>
</feature>
<feature type="helix" evidence="7">
    <location>
        <begin position="96"/>
        <end position="99"/>
    </location>
</feature>
<feature type="helix" evidence="7">
    <location>
        <begin position="102"/>
        <end position="110"/>
    </location>
</feature>
<feature type="strand" evidence="7">
    <location>
        <begin position="116"/>
        <end position="121"/>
    </location>
</feature>
<feature type="helix" evidence="7">
    <location>
        <begin position="122"/>
        <end position="134"/>
    </location>
</feature>
<feature type="helix" evidence="8">
    <location>
        <begin position="139"/>
        <end position="141"/>
    </location>
</feature>
<feature type="strand" evidence="7">
    <location>
        <begin position="142"/>
        <end position="147"/>
    </location>
</feature>
<feature type="strand" evidence="7">
    <location>
        <begin position="152"/>
        <end position="155"/>
    </location>
</feature>
<feature type="turn" evidence="7">
    <location>
        <begin position="156"/>
        <end position="158"/>
    </location>
</feature>
<feature type="strand" evidence="7">
    <location>
        <begin position="159"/>
        <end position="165"/>
    </location>
</feature>
<feature type="strand" evidence="7">
    <location>
        <begin position="169"/>
        <end position="172"/>
    </location>
</feature>
<feature type="strand" evidence="7">
    <location>
        <begin position="174"/>
        <end position="180"/>
    </location>
</feature>
<feature type="strand" evidence="7">
    <location>
        <begin position="183"/>
        <end position="187"/>
    </location>
</feature>
<feature type="helix" evidence="7">
    <location>
        <begin position="206"/>
        <end position="214"/>
    </location>
</feature>
<feature type="strand" evidence="7">
    <location>
        <begin position="217"/>
        <end position="222"/>
    </location>
</feature>
<feature type="turn" evidence="7">
    <location>
        <begin position="224"/>
        <end position="227"/>
    </location>
</feature>
<feature type="helix" evidence="7">
    <location>
        <begin position="235"/>
        <end position="248"/>
    </location>
</feature>
<feature type="strand" evidence="7">
    <location>
        <begin position="253"/>
        <end position="256"/>
    </location>
</feature>
<feature type="helix" evidence="7">
    <location>
        <begin position="262"/>
        <end position="274"/>
    </location>
</feature>
<feature type="strand" evidence="7">
    <location>
        <begin position="278"/>
        <end position="282"/>
    </location>
</feature>
<feature type="helix" evidence="7">
    <location>
        <begin position="284"/>
        <end position="295"/>
    </location>
</feature>
<feature type="helix" evidence="7">
    <location>
        <begin position="309"/>
        <end position="311"/>
    </location>
</feature>
<feature type="strand" evidence="8">
    <location>
        <begin position="312"/>
        <end position="314"/>
    </location>
</feature>
<feature type="helix" evidence="7">
    <location>
        <begin position="316"/>
        <end position="318"/>
    </location>
</feature>
<feature type="strand" evidence="7">
    <location>
        <begin position="319"/>
        <end position="323"/>
    </location>
</feature>
<feature type="helix" evidence="7">
    <location>
        <begin position="331"/>
        <end position="338"/>
    </location>
</feature>
<feature type="strand" evidence="7">
    <location>
        <begin position="352"/>
        <end position="355"/>
    </location>
</feature>
<feature type="helix" evidence="7">
    <location>
        <begin position="364"/>
        <end position="376"/>
    </location>
</feature>
<feature type="strand" evidence="7">
    <location>
        <begin position="380"/>
        <end position="382"/>
    </location>
</feature>
<feature type="turn" evidence="7">
    <location>
        <begin position="384"/>
        <end position="386"/>
    </location>
</feature>
<feature type="strand" evidence="7">
    <location>
        <begin position="387"/>
        <end position="389"/>
    </location>
</feature>
<feature type="helix" evidence="7">
    <location>
        <begin position="397"/>
        <end position="407"/>
    </location>
</feature>
<feature type="strand" evidence="7">
    <location>
        <begin position="410"/>
        <end position="417"/>
    </location>
</feature>
<feature type="helix" evidence="7">
    <location>
        <begin position="419"/>
        <end position="430"/>
    </location>
</feature>
<feature type="strand" evidence="7">
    <location>
        <begin position="432"/>
        <end position="434"/>
    </location>
</feature>
<feature type="strand" evidence="7">
    <location>
        <begin position="437"/>
        <end position="439"/>
    </location>
</feature>
<feature type="strand" evidence="7">
    <location>
        <begin position="446"/>
        <end position="450"/>
    </location>
</feature>
<feature type="strand" evidence="7">
    <location>
        <begin position="455"/>
        <end position="460"/>
    </location>
</feature>
<feature type="strand" evidence="7">
    <location>
        <begin position="465"/>
        <end position="469"/>
    </location>
</feature>
<feature type="strand" evidence="7">
    <location>
        <begin position="472"/>
        <end position="476"/>
    </location>
</feature>
<feature type="helix" evidence="7">
    <location>
        <begin position="478"/>
        <end position="490"/>
    </location>
</feature>
<feature type="strand" evidence="7">
    <location>
        <begin position="492"/>
        <end position="502"/>
    </location>
</feature>
<feature type="strand" evidence="7">
    <location>
        <begin position="504"/>
        <end position="511"/>
    </location>
</feature>
<feature type="helix" evidence="7">
    <location>
        <begin position="514"/>
        <end position="517"/>
    </location>
</feature>
<feature type="helix" evidence="7">
    <location>
        <begin position="520"/>
        <end position="536"/>
    </location>
</feature>
<feature type="helix" evidence="7">
    <location>
        <begin position="541"/>
        <end position="560"/>
    </location>
</feature>
<feature type="strand" evidence="7">
    <location>
        <begin position="565"/>
        <end position="572"/>
    </location>
</feature>
<name>RNJ_THET2</name>
<organism>
    <name type="scientific">Thermus thermophilus (strain ATCC BAA-163 / DSM 7039 / HB27)</name>
    <dbReference type="NCBI Taxonomy" id="262724"/>
    <lineage>
        <taxon>Bacteria</taxon>
        <taxon>Thermotogati</taxon>
        <taxon>Deinococcota</taxon>
        <taxon>Deinococci</taxon>
        <taxon>Thermales</taxon>
        <taxon>Thermaceae</taxon>
        <taxon>Thermus</taxon>
    </lineage>
</organism>
<proteinExistence type="evidence at protein level"/>